<feature type="chain" id="PRO_0000460856" description="Chitin synthase 7">
    <location>
        <begin position="1"/>
        <end position="828"/>
    </location>
</feature>
<feature type="transmembrane region" description="Helical" evidence="1">
    <location>
        <begin position="17"/>
        <end position="37"/>
    </location>
</feature>
<feature type="transmembrane region" description="Helical" evidence="1">
    <location>
        <begin position="57"/>
        <end position="77"/>
    </location>
</feature>
<feature type="transmembrane region" description="Helical" evidence="1">
    <location>
        <begin position="95"/>
        <end position="115"/>
    </location>
</feature>
<feature type="transmembrane region" description="Helical" evidence="1">
    <location>
        <begin position="444"/>
        <end position="464"/>
    </location>
</feature>
<feature type="transmembrane region" description="Helical" evidence="1">
    <location>
        <begin position="473"/>
        <end position="493"/>
    </location>
</feature>
<feature type="transmembrane region" description="Helical" evidence="1">
    <location>
        <begin position="501"/>
        <end position="521"/>
    </location>
</feature>
<feature type="region of interest" description="Disordered" evidence="3">
    <location>
        <begin position="740"/>
        <end position="780"/>
    </location>
</feature>
<feature type="region of interest" description="Disordered" evidence="3">
    <location>
        <begin position="793"/>
        <end position="828"/>
    </location>
</feature>
<feature type="compositionally biased region" description="Low complexity" evidence="3">
    <location>
        <begin position="740"/>
        <end position="752"/>
    </location>
</feature>
<feature type="compositionally biased region" description="Low complexity" evidence="3">
    <location>
        <begin position="813"/>
        <end position="822"/>
    </location>
</feature>
<feature type="glycosylation site" description="N-linked (GlcNAc...) asparagine" evidence="2">
    <location>
        <position position="615"/>
    </location>
</feature>
<feature type="glycosylation site" description="N-linked (GlcNAc...) asparagine" evidence="2">
    <location>
        <position position="818"/>
    </location>
</feature>
<comment type="function">
    <text evidence="4 5 6 10">Polymerizes chitin, a structural polymer of the cell wall and septum, by transferring the sugar moiety of UDP-GlcNAc to the non-reducing end of the growing chitin polymer (Probable). Required for normal appressorial chitin content and for the normal formation and function of these infection structures (PubMed:17378924, PubMed:19161355, PubMed:22346755).</text>
</comment>
<comment type="catalytic activity">
    <reaction evidence="9">
        <text>[(1-&gt;4)-N-acetyl-beta-D-glucosaminyl](n) + UDP-N-acetyl-alpha-D-glucosamine = [(1-&gt;4)-N-acetyl-beta-D-glucosaminyl](n+1) + UDP + H(+)</text>
        <dbReference type="Rhea" id="RHEA:16637"/>
        <dbReference type="Rhea" id="RHEA-COMP:9593"/>
        <dbReference type="Rhea" id="RHEA-COMP:9595"/>
        <dbReference type="ChEBI" id="CHEBI:15378"/>
        <dbReference type="ChEBI" id="CHEBI:17029"/>
        <dbReference type="ChEBI" id="CHEBI:57705"/>
        <dbReference type="ChEBI" id="CHEBI:58223"/>
        <dbReference type="EC" id="2.4.1.16"/>
    </reaction>
    <physiologicalReaction direction="left-to-right" evidence="9">
        <dbReference type="Rhea" id="RHEA:16638"/>
    </physiologicalReaction>
</comment>
<comment type="subcellular location">
    <subcellularLocation>
        <location evidence="5">Membrane</location>
        <topology evidence="1">Multi-pass membrane protein</topology>
    </subcellularLocation>
    <text evidence="5">Localizes within discrete subcellular bodies within the apical cells of ungerminated spores, nascent germ tubes and germ tubes prior to the hooking that precedes appressorium formation (PubMed:19161355). Also present within the conidial cell from which the germ tube emerged for some time following germination (PubMed:19161355). Localizes within both nascent and mature appressoria (PubMed:19161355).</text>
</comment>
<comment type="induction">
    <text evidence="4 5 6">Transcription is regulated by the CON7 transcription factor (PubMed:17378924). Expression is strongly induced on germination of spores and during appressoria maturation (PubMed:19161355, PubMed:22346755).</text>
</comment>
<comment type="disruption phenotype">
    <text evidence="4 5 6">Does not affect vegetative growth (PubMed:22346755). Does not significantly changes in the chitin content in vegetative hyphae, nor in conidia (PubMed:22346755). Abolishes the ability to form appressoria on artificial surfaces, except following the application of the exogenous inducers 1,16-hexadecanediol and cyclic adenosine monophosphate (PubMed:17378924, PubMed:19161355). The appressoria formed have a reduced chitin content and are smaller and misshapen (PubMed:17378924, PubMed:19161355). Also reduces the ability to enter rice plants, but does not affect growth in planta (PubMed:17378924, PubMed:19161355).</text>
</comment>
<comment type="similarity">
    <text evidence="8">Belongs to the chitin synthase family. Class VII subfamily.</text>
</comment>
<reference key="1">
    <citation type="journal article" date="2005" name="Nature">
        <title>The genome sequence of the rice blast fungus Magnaporthe grisea.</title>
        <authorList>
            <person name="Dean R.A."/>
            <person name="Talbot N.J."/>
            <person name="Ebbole D.J."/>
            <person name="Farman M.L."/>
            <person name="Mitchell T.K."/>
            <person name="Orbach M.J."/>
            <person name="Thon M.R."/>
            <person name="Kulkarni R."/>
            <person name="Xu J.-R."/>
            <person name="Pan H."/>
            <person name="Read N.D."/>
            <person name="Lee Y.-H."/>
            <person name="Carbone I."/>
            <person name="Brown D."/>
            <person name="Oh Y.Y."/>
            <person name="Donofrio N."/>
            <person name="Jeong J.S."/>
            <person name="Soanes D.M."/>
            <person name="Djonovic S."/>
            <person name="Kolomiets E."/>
            <person name="Rehmeyer C."/>
            <person name="Li W."/>
            <person name="Harding M."/>
            <person name="Kim S."/>
            <person name="Lebrun M.-H."/>
            <person name="Bohnert H."/>
            <person name="Coughlan S."/>
            <person name="Butler J."/>
            <person name="Calvo S.E."/>
            <person name="Ma L.-J."/>
            <person name="Nicol R."/>
            <person name="Purcell S."/>
            <person name="Nusbaum C."/>
            <person name="Galagan J.E."/>
            <person name="Birren B.W."/>
        </authorList>
    </citation>
    <scope>NUCLEOTIDE SEQUENCE [LARGE SCALE GENOMIC DNA]</scope>
    <source>
        <strain>70-15 / ATCC MYA-4617 / FGSC 8958</strain>
    </source>
</reference>
<reference key="2">
    <citation type="journal article" date="2007" name="Mol. Microbiol.">
        <title>The transcription factor Con7p is a central regulator of infection-related morphogenesis in the rice blast fungus Magnaporthe grisea.</title>
        <authorList>
            <person name="Odenbach D."/>
            <person name="Breth B."/>
            <person name="Thines E."/>
            <person name="Weber R.W."/>
            <person name="Anke H."/>
            <person name="Foster A.J."/>
        </authorList>
    </citation>
    <scope>FUNCTION</scope>
    <scope>INDUCTION</scope>
</reference>
<reference key="3">
    <citation type="journal article" date="2009" name="Mol. Plant Pathol.">
        <title>The Magnaporthe grisea class VII chitin synthase is required for normal appressorial development and function.</title>
        <authorList>
            <person name="Odenbach D."/>
            <person name="Thines E."/>
            <person name="Anke H."/>
            <person name="Foster A.J."/>
        </authorList>
    </citation>
    <scope>FUNCTION</scope>
    <scope>DISRUPTION PHENOTYPE</scope>
    <scope>INDUCTION</scope>
    <scope>SUBCELLULAR LOCATION</scope>
</reference>
<reference key="4">
    <citation type="journal article" date="2012" name="PLoS Pathog.">
        <title>Different chitin synthase genes are required for various developmental and plant infection processes in the rice blast fungus Magnaporthe oryzae.</title>
        <authorList>
            <person name="Kong L.A."/>
            <person name="Yang J."/>
            <person name="Li G.T."/>
            <person name="Qi L.L."/>
            <person name="Zhang Y.J."/>
            <person name="Wang C.F."/>
            <person name="Zhao W.S."/>
            <person name="Xu J.R."/>
            <person name="Peng Y.L."/>
        </authorList>
    </citation>
    <scope>FUNCTION</scope>
    <scope>INDUCTION</scope>
    <scope>DISRUPTION PHENOTYPE</scope>
</reference>
<gene>
    <name evidence="7" type="primary">CHS7</name>
    <name type="ORF">MGG_06064</name>
</gene>
<dbReference type="EC" id="2.4.1.16" evidence="10"/>
<dbReference type="EMBL" id="CM001233">
    <property type="protein sequence ID" value="EHA52111.1"/>
    <property type="molecule type" value="Genomic_DNA"/>
</dbReference>
<dbReference type="RefSeq" id="XP_003711918.1">
    <property type="nucleotide sequence ID" value="XM_003711870.1"/>
</dbReference>
<dbReference type="STRING" id="242507.G4N553"/>
<dbReference type="EnsemblFungi" id="MGG_06064T0">
    <property type="protein sequence ID" value="MGG_06064T0"/>
    <property type="gene ID" value="MGG_06064"/>
</dbReference>
<dbReference type="GeneID" id="2684245"/>
<dbReference type="KEGG" id="mgr:MGG_06064"/>
<dbReference type="VEuPathDB" id="FungiDB:MGG_06064"/>
<dbReference type="eggNOG" id="KOG2571">
    <property type="taxonomic scope" value="Eukaryota"/>
</dbReference>
<dbReference type="HOGENOM" id="CLU_012773_0_0_1"/>
<dbReference type="InParanoid" id="G4N553"/>
<dbReference type="OMA" id="NCIHVFL"/>
<dbReference type="OrthoDB" id="5321960at2759"/>
<dbReference type="Proteomes" id="UP000009058">
    <property type="component" value="Chromosome 3"/>
</dbReference>
<dbReference type="GO" id="GO:0071944">
    <property type="term" value="C:cell periphery"/>
    <property type="evidence" value="ECO:0007669"/>
    <property type="project" value="TreeGrafter"/>
</dbReference>
<dbReference type="GO" id="GO:0030428">
    <property type="term" value="C:cell septum"/>
    <property type="evidence" value="ECO:0007669"/>
    <property type="project" value="TreeGrafter"/>
</dbReference>
<dbReference type="GO" id="GO:0016020">
    <property type="term" value="C:membrane"/>
    <property type="evidence" value="ECO:0007669"/>
    <property type="project" value="UniProtKB-SubCell"/>
</dbReference>
<dbReference type="GO" id="GO:0004100">
    <property type="term" value="F:chitin synthase activity"/>
    <property type="evidence" value="ECO:0007669"/>
    <property type="project" value="UniProtKB-EC"/>
</dbReference>
<dbReference type="GO" id="GO:0006031">
    <property type="term" value="P:chitin biosynthetic process"/>
    <property type="evidence" value="ECO:0007669"/>
    <property type="project" value="TreeGrafter"/>
</dbReference>
<dbReference type="FunFam" id="3.90.550.10:FF:000077">
    <property type="entry name" value="Probable chitin synthase D"/>
    <property type="match status" value="1"/>
</dbReference>
<dbReference type="Gene3D" id="3.90.550.10">
    <property type="entry name" value="Spore Coat Polysaccharide Biosynthesis Protein SpsA, Chain A"/>
    <property type="match status" value="1"/>
</dbReference>
<dbReference type="InterPro" id="IPR004835">
    <property type="entry name" value="Chitin_synth"/>
</dbReference>
<dbReference type="InterPro" id="IPR029044">
    <property type="entry name" value="Nucleotide-diphossugar_trans"/>
</dbReference>
<dbReference type="PANTHER" id="PTHR22914">
    <property type="entry name" value="CHITIN SYNTHASE"/>
    <property type="match status" value="1"/>
</dbReference>
<dbReference type="PANTHER" id="PTHR22914:SF46">
    <property type="entry name" value="CHITIN SYNTHASE"/>
    <property type="match status" value="1"/>
</dbReference>
<dbReference type="Pfam" id="PF03142">
    <property type="entry name" value="Chitin_synth_2"/>
    <property type="match status" value="1"/>
</dbReference>
<dbReference type="SUPFAM" id="SSF53448">
    <property type="entry name" value="Nucleotide-diphospho-sugar transferases"/>
    <property type="match status" value="1"/>
</dbReference>
<name>CHIS7_PYRO7</name>
<accession>G4N553</accession>
<keyword id="KW-0325">Glycoprotein</keyword>
<keyword id="KW-0328">Glycosyltransferase</keyword>
<keyword id="KW-0472">Membrane</keyword>
<keyword id="KW-1185">Reference proteome</keyword>
<keyword id="KW-0808">Transferase</keyword>
<keyword id="KW-0812">Transmembrane</keyword>
<keyword id="KW-1133">Transmembrane helix</keyword>
<keyword id="KW-0843">Virulence</keyword>
<proteinExistence type="evidence at transcript level"/>
<protein>
    <recommendedName>
        <fullName evidence="7">Chitin synthase 7</fullName>
        <ecNumber evidence="10">2.4.1.16</ecNumber>
    </recommendedName>
    <alternativeName>
        <fullName evidence="8">Chitin-UDP acetyl-glucosaminyl transferase 7</fullName>
    </alternativeName>
    <alternativeName>
        <fullName evidence="7">Class-VII chitin synthase 7</fullName>
    </alternativeName>
</protein>
<organism>
    <name type="scientific">Pyricularia oryzae (strain 70-15 / ATCC MYA-4617 / FGSC 8958)</name>
    <name type="common">Rice blast fungus</name>
    <name type="synonym">Magnaporthe oryzae</name>
    <dbReference type="NCBI Taxonomy" id="242507"/>
    <lineage>
        <taxon>Eukaryota</taxon>
        <taxon>Fungi</taxon>
        <taxon>Dikarya</taxon>
        <taxon>Ascomycota</taxon>
        <taxon>Pezizomycotina</taxon>
        <taxon>Sordariomycetes</taxon>
        <taxon>Sordariomycetidae</taxon>
        <taxon>Magnaporthales</taxon>
        <taxon>Pyriculariaceae</taxon>
        <taxon>Pyricularia</taxon>
    </lineage>
</organism>
<evidence type="ECO:0000255" key="1"/>
<evidence type="ECO:0000255" key="2">
    <source>
        <dbReference type="PROSITE-ProRule" id="PRU00498"/>
    </source>
</evidence>
<evidence type="ECO:0000256" key="3">
    <source>
        <dbReference type="SAM" id="MobiDB-lite"/>
    </source>
</evidence>
<evidence type="ECO:0000269" key="4">
    <source>
    </source>
</evidence>
<evidence type="ECO:0000269" key="5">
    <source>
    </source>
</evidence>
<evidence type="ECO:0000269" key="6">
    <source>
    </source>
</evidence>
<evidence type="ECO:0000303" key="7">
    <source>
    </source>
</evidence>
<evidence type="ECO:0000305" key="8"/>
<evidence type="ECO:0000305" key="9">
    <source>
    </source>
</evidence>
<evidence type="ECO:0000305" key="10">
    <source>
    </source>
</evidence>
<sequence>MGNPFEGWPVHDIVYTVIVGLVMLAAVLEWFLWVAAFMYCLVKVFIKAEHWTIRALAVVVAILFVGFRAVFLPIMVVTLPLPSAIVKLWPEDMVVGLQWFAFWAFAGLLTIPWLFCVYHFVTNQLGREKRVKQVLDEVSAPKVVIVMPCYKEDPEVLLVAMNSIVDCDYPPSCIHVFLSFDGDQVDELYLNTIETFGVPLTLDSYPKSIDVTYKAARITISRFPHGGKRHCQKATFKLIDKVYKEYLERNDNLFILFIDSDCILDRVCLQNFIYDMELSPGNSRDMLAMTGVITSTTKKHSLITVLQDLEYIHGQLFERTVESGCGAVTCLPGALTMLRFSAFRRMAKYYFADKAEQCEDLFDFAKCHLGEDRWLTHLFMIGAKKRYQIQMCTSAFCKTEAVQTMQSLVKQRRRWFLGFITNEVCMLTDWRLWTRYPLLVLIRFMQNTIRTTALLFFIMVLAILTTSKRVSDLPVGFIAISLGLNWLMMIYFGAKLRRFKIWLYPLMFVLNPFFNWWYMVYGIFTAGQRTWGGPRADAAAADGDTTAQQAIEAAEKAGDDLNIVPETFIPAAQIKRKESGRRRIVAGGNIQPSAKIDGMFAIPERGANGWYQHDNISLFTVAHGHTGRVPLHPRDSFDSFLSAQTALNSVYIPRRVESIMGDEDRRKYELAQASQFNQFLSNQRRSTNGEPPQGQVYEYSDVDLQKAGYTDNPLPPTPGETASAVPAALNLHHKVGSTDSLVSLGSSASNSNQRDRGRQRTLMPPTSSQARTGRSPLGRASFLRTSTIEDIELEIGTSHGSSANRPALSRQASNNDPNNSNSGGHQQR</sequence>